<proteinExistence type="inferred from homology"/>
<comment type="function">
    <text evidence="1">Key enzyme in heme biosynthesis. Catalyzes the oxidative decarboxylation of propionic acid side chains of rings A and B of coproporphyrinogen III (By similarity).</text>
</comment>
<comment type="catalytic activity">
    <reaction evidence="2">
        <text>coproporphyrinogen III + O2 + 2 H(+) = protoporphyrinogen IX + 2 CO2 + 2 H2O</text>
        <dbReference type="Rhea" id="RHEA:18257"/>
        <dbReference type="ChEBI" id="CHEBI:15377"/>
        <dbReference type="ChEBI" id="CHEBI:15378"/>
        <dbReference type="ChEBI" id="CHEBI:15379"/>
        <dbReference type="ChEBI" id="CHEBI:16526"/>
        <dbReference type="ChEBI" id="CHEBI:57307"/>
        <dbReference type="ChEBI" id="CHEBI:57309"/>
        <dbReference type="EC" id="1.3.3.3"/>
    </reaction>
</comment>
<comment type="pathway">
    <text evidence="2">Porphyrin-containing compound metabolism; protoporphyrin-IX biosynthesis; protoporphyrinogen-IX from coproporphyrinogen-III (O2 route): step 1/1.</text>
</comment>
<comment type="subunit">
    <text evidence="2">Homodimer.</text>
</comment>
<comment type="subcellular location">
    <subcellularLocation>
        <location evidence="2">Cytoplasm</location>
    </subcellularLocation>
</comment>
<comment type="similarity">
    <text evidence="2">Belongs to the aerobic coproporphyrinogen-III oxidase family.</text>
</comment>
<protein>
    <recommendedName>
        <fullName>Coproporphyrinogen-III oxidase, aerobic 1</fullName>
        <shortName evidence="2">Coprogen oxidase 1</shortName>
        <shortName evidence="2">Coproporphyrinogenase 1</shortName>
        <ecNumber evidence="2">1.3.3.3</ecNumber>
    </recommendedName>
</protein>
<name>HEM61_NOSS1</name>
<gene>
    <name evidence="2" type="primary">hemF1</name>
    <name type="ordered locus">all0650</name>
</gene>
<evidence type="ECO:0000250" key="1"/>
<evidence type="ECO:0000255" key="2">
    <source>
        <dbReference type="HAMAP-Rule" id="MF_00333"/>
    </source>
</evidence>
<dbReference type="EC" id="1.3.3.3" evidence="2"/>
<dbReference type="EMBL" id="BA000019">
    <property type="protein sequence ID" value="BAB72608.1"/>
    <property type="molecule type" value="Genomic_DNA"/>
</dbReference>
<dbReference type="PIR" id="AI1887">
    <property type="entry name" value="AI1887"/>
</dbReference>
<dbReference type="SMR" id="Q8YZ37"/>
<dbReference type="STRING" id="103690.gene:10492661"/>
<dbReference type="KEGG" id="ana:all0650"/>
<dbReference type="eggNOG" id="COG0408">
    <property type="taxonomic scope" value="Bacteria"/>
</dbReference>
<dbReference type="UniPathway" id="UPA00251">
    <property type="reaction ID" value="UER00322"/>
</dbReference>
<dbReference type="Proteomes" id="UP000002483">
    <property type="component" value="Chromosome"/>
</dbReference>
<dbReference type="GO" id="GO:0005737">
    <property type="term" value="C:cytoplasm"/>
    <property type="evidence" value="ECO:0007669"/>
    <property type="project" value="UniProtKB-SubCell"/>
</dbReference>
<dbReference type="GO" id="GO:0004109">
    <property type="term" value="F:coproporphyrinogen oxidase activity"/>
    <property type="evidence" value="ECO:0007669"/>
    <property type="project" value="UniProtKB-UniRule"/>
</dbReference>
<dbReference type="GO" id="GO:0042803">
    <property type="term" value="F:protein homodimerization activity"/>
    <property type="evidence" value="ECO:0000250"/>
    <property type="project" value="UniProtKB"/>
</dbReference>
<dbReference type="GO" id="GO:0015995">
    <property type="term" value="P:chlorophyll biosynthetic process"/>
    <property type="evidence" value="ECO:0007669"/>
    <property type="project" value="UniProtKB-UniRule"/>
</dbReference>
<dbReference type="GO" id="GO:0006782">
    <property type="term" value="P:protoporphyrinogen IX biosynthetic process"/>
    <property type="evidence" value="ECO:0007669"/>
    <property type="project" value="UniProtKB-UniRule"/>
</dbReference>
<dbReference type="FunFam" id="3.40.1500.10:FF:000007">
    <property type="entry name" value="Oxygen-dependent coproporphyrinogen-III oxidase"/>
    <property type="match status" value="1"/>
</dbReference>
<dbReference type="Gene3D" id="3.40.1500.10">
    <property type="entry name" value="Coproporphyrinogen III oxidase, aerobic"/>
    <property type="match status" value="1"/>
</dbReference>
<dbReference type="HAMAP" id="MF_00333">
    <property type="entry name" value="Coprogen_oxidas"/>
    <property type="match status" value="1"/>
</dbReference>
<dbReference type="InterPro" id="IPR001260">
    <property type="entry name" value="Coprogen_oxidase_aer"/>
</dbReference>
<dbReference type="InterPro" id="IPR036406">
    <property type="entry name" value="Coprogen_oxidase_aer_sf"/>
</dbReference>
<dbReference type="InterPro" id="IPR018375">
    <property type="entry name" value="Coprogen_oxidase_CS"/>
</dbReference>
<dbReference type="NCBIfam" id="NF003727">
    <property type="entry name" value="PRK05330.1"/>
    <property type="match status" value="1"/>
</dbReference>
<dbReference type="PANTHER" id="PTHR10755">
    <property type="entry name" value="COPROPORPHYRINOGEN III OXIDASE, MITOCHONDRIAL"/>
    <property type="match status" value="1"/>
</dbReference>
<dbReference type="PANTHER" id="PTHR10755:SF0">
    <property type="entry name" value="OXYGEN-DEPENDENT COPROPORPHYRINOGEN-III OXIDASE, MITOCHONDRIAL"/>
    <property type="match status" value="1"/>
</dbReference>
<dbReference type="Pfam" id="PF01218">
    <property type="entry name" value="Coprogen_oxidas"/>
    <property type="match status" value="1"/>
</dbReference>
<dbReference type="PIRSF" id="PIRSF000166">
    <property type="entry name" value="Coproporphyri_ox"/>
    <property type="match status" value="1"/>
</dbReference>
<dbReference type="PRINTS" id="PR00073">
    <property type="entry name" value="COPRGNOXDASE"/>
</dbReference>
<dbReference type="SUPFAM" id="SSF102886">
    <property type="entry name" value="Coproporphyrinogen III oxidase"/>
    <property type="match status" value="1"/>
</dbReference>
<dbReference type="PROSITE" id="PS01021">
    <property type="entry name" value="COPROGEN_OXIDASE"/>
    <property type="match status" value="1"/>
</dbReference>
<sequence length="317" mass="36514">MKQLQDEITQALTKLDGGSEFHEDSWERPEGGGGRSRVLRDGAIFEQAGVNFSEVWGSHLPPSILAQRPEAEGHGFYATGTSLVLHPRNPYVPTVHLNYRYFEAGPVWWFGGGADLTPYYPFAEDAAHFHQTLKLACDEHHPEYYPVFKRWCDEYFYLKHRDETRGVGGLFFDYQDGQGVLYRGPNPKGEAANYSNQVGEPASRDWEDLFSFIQGSGKAFLPAYVPIVERRHGMEYGDRQRNFQLYRRGRYVEFNLVYDRGTIFGLQTNGRTESILMSLPPLVRWEYGYQPEPNSPEAELYDTFLKPQDWSNWTANQ</sequence>
<keyword id="KW-0963">Cytoplasm</keyword>
<keyword id="KW-0560">Oxidoreductase</keyword>
<keyword id="KW-0627">Porphyrin biosynthesis</keyword>
<keyword id="KW-1185">Reference proteome</keyword>
<feature type="chain" id="PRO_0000109880" description="Coproporphyrinogen-III oxidase, aerobic 1">
    <location>
        <begin position="1"/>
        <end position="317"/>
    </location>
</feature>
<feature type="region of interest" description="Important for dimerization" evidence="2">
    <location>
        <begin position="38"/>
        <end position="47"/>
    </location>
</feature>
<feature type="region of interest" description="Important for dimerization" evidence="2">
    <location>
        <begin position="251"/>
        <end position="286"/>
    </location>
</feature>
<feature type="active site" description="Proton donor" evidence="2">
    <location>
        <position position="96"/>
    </location>
</feature>
<feature type="binding site" evidence="2">
    <location>
        <position position="82"/>
    </location>
    <ligand>
        <name>substrate</name>
    </ligand>
</feature>
<feature type="binding site" evidence="2">
    <location>
        <begin position="98"/>
        <end position="100"/>
    </location>
    <ligand>
        <name>substrate</name>
    </ligand>
</feature>
<feature type="binding site" evidence="2">
    <location>
        <begin position="269"/>
        <end position="274"/>
    </location>
    <ligand>
        <name>substrate</name>
    </ligand>
</feature>
<feature type="site" description="Important for dimerization" evidence="2">
    <location>
        <position position="160"/>
    </location>
</feature>
<accession>Q8YZ37</accession>
<organism>
    <name type="scientific">Nostoc sp. (strain PCC 7120 / SAG 25.82 / UTEX 2576)</name>
    <dbReference type="NCBI Taxonomy" id="103690"/>
    <lineage>
        <taxon>Bacteria</taxon>
        <taxon>Bacillati</taxon>
        <taxon>Cyanobacteriota</taxon>
        <taxon>Cyanophyceae</taxon>
        <taxon>Nostocales</taxon>
        <taxon>Nostocaceae</taxon>
        <taxon>Nostoc</taxon>
    </lineage>
</organism>
<reference key="1">
    <citation type="journal article" date="2001" name="DNA Res.">
        <title>Complete genomic sequence of the filamentous nitrogen-fixing cyanobacterium Anabaena sp. strain PCC 7120.</title>
        <authorList>
            <person name="Kaneko T."/>
            <person name="Nakamura Y."/>
            <person name="Wolk C.P."/>
            <person name="Kuritz T."/>
            <person name="Sasamoto S."/>
            <person name="Watanabe A."/>
            <person name="Iriguchi M."/>
            <person name="Ishikawa A."/>
            <person name="Kawashima K."/>
            <person name="Kimura T."/>
            <person name="Kishida Y."/>
            <person name="Kohara M."/>
            <person name="Matsumoto M."/>
            <person name="Matsuno A."/>
            <person name="Muraki A."/>
            <person name="Nakazaki N."/>
            <person name="Shimpo S."/>
            <person name="Sugimoto M."/>
            <person name="Takazawa M."/>
            <person name="Yamada M."/>
            <person name="Yasuda M."/>
            <person name="Tabata S."/>
        </authorList>
    </citation>
    <scope>NUCLEOTIDE SEQUENCE [LARGE SCALE GENOMIC DNA]</scope>
    <source>
        <strain>PCC 7120 / SAG 25.82 / UTEX 2576</strain>
    </source>
</reference>